<name>DADA_BORPA</name>
<sequence>MHVIVLGSGVIGTTTAYYLARQGAQVTVLERRAGPADETSYGNAGQVSPGYSTPWAAPGIPLKALKWMFQKHAPLAIRADGSFYQWRWLAAMLANCSAGRYSVNKERMLRLAEYSRDCLRTLRADTGIQYEQRTQGTLQLFRTAAQMEAARRDIAVLEECGVPYELLDRNRLPTAEPALARALDKLAGGLRLPNDETGDCRRFTLQLADKAKALGVQFRFNQQVEGLDVRGGQVAGVRVGGEQLAADCYVAAFGSYTRGFLRPLGLDLPVYPVKGYSLTIPMTDESAAPVSTILDETYKVAVTRFDQRIRVGGMAELAGFDLRLKEARRKTLELVVNDLSPGSGAVEQAEFWTGLRPMTPDSTPIIGATKYGNLFLNTGHGTLGWTMACGSGQLVADQVCGRQPAIRADDLALSRYGAGGQAGGGVARAQHNAA</sequence>
<gene>
    <name evidence="1" type="primary">dadA</name>
    <name type="ordered locus">BPP3086</name>
</gene>
<keyword id="KW-0274">FAD</keyword>
<keyword id="KW-0285">Flavoprotein</keyword>
<keyword id="KW-0560">Oxidoreductase</keyword>
<protein>
    <recommendedName>
        <fullName evidence="1">D-amino acid dehydrogenase</fullName>
        <ecNumber evidence="1">1.4.99.-</ecNumber>
    </recommendedName>
</protein>
<dbReference type="EC" id="1.4.99.-" evidence="1"/>
<dbReference type="EMBL" id="BX640432">
    <property type="protein sequence ID" value="CAE38373.1"/>
    <property type="molecule type" value="Genomic_DNA"/>
</dbReference>
<dbReference type="RefSeq" id="WP_010928890.1">
    <property type="nucleotide sequence ID" value="NC_002928.3"/>
</dbReference>
<dbReference type="SMR" id="Q7W641"/>
<dbReference type="GeneID" id="93204868"/>
<dbReference type="KEGG" id="bpa:BPP3086"/>
<dbReference type="HOGENOM" id="CLU_007884_9_2_4"/>
<dbReference type="Proteomes" id="UP000001421">
    <property type="component" value="Chromosome"/>
</dbReference>
<dbReference type="GO" id="GO:0005737">
    <property type="term" value="C:cytoplasm"/>
    <property type="evidence" value="ECO:0007669"/>
    <property type="project" value="TreeGrafter"/>
</dbReference>
<dbReference type="GO" id="GO:0005886">
    <property type="term" value="C:plasma membrane"/>
    <property type="evidence" value="ECO:0007669"/>
    <property type="project" value="TreeGrafter"/>
</dbReference>
<dbReference type="GO" id="GO:0008718">
    <property type="term" value="F:D-amino-acid dehydrogenase activity"/>
    <property type="evidence" value="ECO:0007669"/>
    <property type="project" value="UniProtKB-UniRule"/>
</dbReference>
<dbReference type="GO" id="GO:0055130">
    <property type="term" value="P:D-alanine catabolic process"/>
    <property type="evidence" value="ECO:0007669"/>
    <property type="project" value="TreeGrafter"/>
</dbReference>
<dbReference type="FunFam" id="3.50.50.60:FF:000020">
    <property type="entry name" value="D-amino acid dehydrogenase"/>
    <property type="match status" value="1"/>
</dbReference>
<dbReference type="Gene3D" id="3.30.9.10">
    <property type="entry name" value="D-Amino Acid Oxidase, subunit A, domain 2"/>
    <property type="match status" value="1"/>
</dbReference>
<dbReference type="Gene3D" id="3.50.50.60">
    <property type="entry name" value="FAD/NAD(P)-binding domain"/>
    <property type="match status" value="2"/>
</dbReference>
<dbReference type="HAMAP" id="MF_01202">
    <property type="entry name" value="DadA"/>
    <property type="match status" value="1"/>
</dbReference>
<dbReference type="InterPro" id="IPR023080">
    <property type="entry name" value="DadA"/>
</dbReference>
<dbReference type="InterPro" id="IPR006076">
    <property type="entry name" value="FAD-dep_OxRdtase"/>
</dbReference>
<dbReference type="InterPro" id="IPR036188">
    <property type="entry name" value="FAD/NAD-bd_sf"/>
</dbReference>
<dbReference type="NCBIfam" id="NF001933">
    <property type="entry name" value="PRK00711.1"/>
    <property type="match status" value="1"/>
</dbReference>
<dbReference type="PANTHER" id="PTHR13847:SF280">
    <property type="entry name" value="D-AMINO ACID DEHYDROGENASE"/>
    <property type="match status" value="1"/>
</dbReference>
<dbReference type="PANTHER" id="PTHR13847">
    <property type="entry name" value="SARCOSINE DEHYDROGENASE-RELATED"/>
    <property type="match status" value="1"/>
</dbReference>
<dbReference type="Pfam" id="PF01266">
    <property type="entry name" value="DAO"/>
    <property type="match status" value="1"/>
</dbReference>
<dbReference type="SUPFAM" id="SSF54373">
    <property type="entry name" value="FAD-linked reductases, C-terminal domain"/>
    <property type="match status" value="1"/>
</dbReference>
<dbReference type="SUPFAM" id="SSF51905">
    <property type="entry name" value="FAD/NAD(P)-binding domain"/>
    <property type="match status" value="1"/>
</dbReference>
<organism>
    <name type="scientific">Bordetella parapertussis (strain 12822 / ATCC BAA-587 / NCTC 13253)</name>
    <dbReference type="NCBI Taxonomy" id="257311"/>
    <lineage>
        <taxon>Bacteria</taxon>
        <taxon>Pseudomonadati</taxon>
        <taxon>Pseudomonadota</taxon>
        <taxon>Betaproteobacteria</taxon>
        <taxon>Burkholderiales</taxon>
        <taxon>Alcaligenaceae</taxon>
        <taxon>Bordetella</taxon>
    </lineage>
</organism>
<proteinExistence type="inferred from homology"/>
<accession>Q7W641</accession>
<reference key="1">
    <citation type="journal article" date="2003" name="Nat. Genet.">
        <title>Comparative analysis of the genome sequences of Bordetella pertussis, Bordetella parapertussis and Bordetella bronchiseptica.</title>
        <authorList>
            <person name="Parkhill J."/>
            <person name="Sebaihia M."/>
            <person name="Preston A."/>
            <person name="Murphy L.D."/>
            <person name="Thomson N.R."/>
            <person name="Harris D.E."/>
            <person name="Holden M.T.G."/>
            <person name="Churcher C.M."/>
            <person name="Bentley S.D."/>
            <person name="Mungall K.L."/>
            <person name="Cerdeno-Tarraga A.-M."/>
            <person name="Temple L."/>
            <person name="James K.D."/>
            <person name="Harris B."/>
            <person name="Quail M.A."/>
            <person name="Achtman M."/>
            <person name="Atkin R."/>
            <person name="Baker S."/>
            <person name="Basham D."/>
            <person name="Bason N."/>
            <person name="Cherevach I."/>
            <person name="Chillingworth T."/>
            <person name="Collins M."/>
            <person name="Cronin A."/>
            <person name="Davis P."/>
            <person name="Doggett J."/>
            <person name="Feltwell T."/>
            <person name="Goble A."/>
            <person name="Hamlin N."/>
            <person name="Hauser H."/>
            <person name="Holroyd S."/>
            <person name="Jagels K."/>
            <person name="Leather S."/>
            <person name="Moule S."/>
            <person name="Norberczak H."/>
            <person name="O'Neil S."/>
            <person name="Ormond D."/>
            <person name="Price C."/>
            <person name="Rabbinowitsch E."/>
            <person name="Rutter S."/>
            <person name="Sanders M."/>
            <person name="Saunders D."/>
            <person name="Seeger K."/>
            <person name="Sharp S."/>
            <person name="Simmonds M."/>
            <person name="Skelton J."/>
            <person name="Squares R."/>
            <person name="Squares S."/>
            <person name="Stevens K."/>
            <person name="Unwin L."/>
            <person name="Whitehead S."/>
            <person name="Barrell B.G."/>
            <person name="Maskell D.J."/>
        </authorList>
    </citation>
    <scope>NUCLEOTIDE SEQUENCE [LARGE SCALE GENOMIC DNA]</scope>
    <source>
        <strain>12822 / ATCC BAA-587 / NCTC 13253</strain>
    </source>
</reference>
<comment type="function">
    <text evidence="1">Oxidative deamination of D-amino acids.</text>
</comment>
<comment type="catalytic activity">
    <reaction evidence="1">
        <text>a D-alpha-amino acid + A + H2O = a 2-oxocarboxylate + AH2 + NH4(+)</text>
        <dbReference type="Rhea" id="RHEA:18125"/>
        <dbReference type="ChEBI" id="CHEBI:13193"/>
        <dbReference type="ChEBI" id="CHEBI:15377"/>
        <dbReference type="ChEBI" id="CHEBI:17499"/>
        <dbReference type="ChEBI" id="CHEBI:28938"/>
        <dbReference type="ChEBI" id="CHEBI:35179"/>
        <dbReference type="ChEBI" id="CHEBI:59871"/>
    </reaction>
</comment>
<comment type="cofactor">
    <cofactor evidence="1">
        <name>FAD</name>
        <dbReference type="ChEBI" id="CHEBI:57692"/>
    </cofactor>
</comment>
<comment type="similarity">
    <text evidence="1">Belongs to the DadA oxidoreductase family.</text>
</comment>
<feature type="chain" id="PRO_0000166126" description="D-amino acid dehydrogenase">
    <location>
        <begin position="1"/>
        <end position="434"/>
    </location>
</feature>
<feature type="binding site" evidence="1">
    <location>
        <begin position="3"/>
        <end position="17"/>
    </location>
    <ligand>
        <name>FAD</name>
        <dbReference type="ChEBI" id="CHEBI:57692"/>
    </ligand>
</feature>
<evidence type="ECO:0000255" key="1">
    <source>
        <dbReference type="HAMAP-Rule" id="MF_01202"/>
    </source>
</evidence>